<evidence type="ECO:0000255" key="1">
    <source>
        <dbReference type="HAMAP-Rule" id="MF_00087"/>
    </source>
</evidence>
<organism>
    <name type="scientific">Campylobacter jejuni subsp. doylei (strain ATCC BAA-1458 / RM4099 / 269.97)</name>
    <dbReference type="NCBI Taxonomy" id="360109"/>
    <lineage>
        <taxon>Bacteria</taxon>
        <taxon>Pseudomonadati</taxon>
        <taxon>Campylobacterota</taxon>
        <taxon>Epsilonproteobacteria</taxon>
        <taxon>Campylobacterales</taxon>
        <taxon>Campylobacteraceae</taxon>
        <taxon>Campylobacter</taxon>
    </lineage>
</organism>
<name>HEM1_CAMJD</name>
<sequence length="432" mass="48851">MYYCISFTYKNTDIALREKLSFSNETKKSEFLKIISTHENIEECLVISTCNRVEIVAFVKMACAEFIVKSLALLCDVDKDILLEKADIFEDSGAIHHLFSVASSLDSLVVGETQIAGQLKDAFAFAVKNSFCGVHLSRAVHSAFKCATKVRNETQISKKPISVASVAVAKAKELADLTQKKAVVIGAGEMGELAAKHLIAAGAKVIILNRDLQKAKDLCERLGVLSEYDSLENLKKYLNQYEFFFSATNAPNAIITNSLIEELPYKRYFFDIAVPRDIDINENENISVFAVDDLEIVVQKNLALREQEARMAYGIIGRETSEFFRYLNDLALMPIIKAIRLQAKEYADKQLEIALKKGYLKKSDKEEARKLIHQVFKAFLHMPTVNLKHLQGKMQSDTVINAMRYVFDLKNNLEGLNQYKCEFDMENNDEIY</sequence>
<protein>
    <recommendedName>
        <fullName evidence="1">Glutamyl-tRNA reductase</fullName>
        <shortName evidence="1">GluTR</shortName>
        <ecNumber evidence="1">1.2.1.70</ecNumber>
    </recommendedName>
</protein>
<comment type="function">
    <text evidence="1">Catalyzes the NADPH-dependent reduction of glutamyl-tRNA(Glu) to glutamate 1-semialdehyde (GSA).</text>
</comment>
<comment type="catalytic activity">
    <reaction evidence="1">
        <text>(S)-4-amino-5-oxopentanoate + tRNA(Glu) + NADP(+) = L-glutamyl-tRNA(Glu) + NADPH + H(+)</text>
        <dbReference type="Rhea" id="RHEA:12344"/>
        <dbReference type="Rhea" id="RHEA-COMP:9663"/>
        <dbReference type="Rhea" id="RHEA-COMP:9680"/>
        <dbReference type="ChEBI" id="CHEBI:15378"/>
        <dbReference type="ChEBI" id="CHEBI:57501"/>
        <dbReference type="ChEBI" id="CHEBI:57783"/>
        <dbReference type="ChEBI" id="CHEBI:58349"/>
        <dbReference type="ChEBI" id="CHEBI:78442"/>
        <dbReference type="ChEBI" id="CHEBI:78520"/>
        <dbReference type="EC" id="1.2.1.70"/>
    </reaction>
</comment>
<comment type="pathway">
    <text evidence="1">Porphyrin-containing compound metabolism; protoporphyrin-IX biosynthesis; 5-aminolevulinate from L-glutamyl-tRNA(Glu): step 1/2.</text>
</comment>
<comment type="subunit">
    <text evidence="1">Homodimer.</text>
</comment>
<comment type="domain">
    <text evidence="1">Possesses an unusual extended V-shaped dimeric structure with each monomer consisting of three distinct domains arranged along a curved 'spinal' alpha-helix. The N-terminal catalytic domain specifically recognizes the glutamate moiety of the substrate. The second domain is the NADPH-binding domain, and the third C-terminal domain is responsible for dimerization.</text>
</comment>
<comment type="miscellaneous">
    <text evidence="1">During catalysis, the active site Cys acts as a nucleophile attacking the alpha-carbonyl group of tRNA-bound glutamate with the formation of a thioester intermediate between enzyme and glutamate, and the concomitant release of tRNA(Glu). The thioester intermediate is finally reduced by direct hydride transfer from NADPH, to form the product GSA.</text>
</comment>
<comment type="similarity">
    <text evidence="1">Belongs to the glutamyl-tRNA reductase family.</text>
</comment>
<feature type="chain" id="PRO_1000004604" description="Glutamyl-tRNA reductase">
    <location>
        <begin position="1"/>
        <end position="432"/>
    </location>
</feature>
<feature type="active site" description="Nucleophile" evidence="1">
    <location>
        <position position="50"/>
    </location>
</feature>
<feature type="binding site" evidence="1">
    <location>
        <begin position="49"/>
        <end position="52"/>
    </location>
    <ligand>
        <name>substrate</name>
    </ligand>
</feature>
<feature type="binding site" evidence="1">
    <location>
        <position position="107"/>
    </location>
    <ligand>
        <name>substrate</name>
    </ligand>
</feature>
<feature type="binding site" evidence="1">
    <location>
        <begin position="112"/>
        <end position="114"/>
    </location>
    <ligand>
        <name>substrate</name>
    </ligand>
</feature>
<feature type="binding site" evidence="1">
    <location>
        <position position="118"/>
    </location>
    <ligand>
        <name>substrate</name>
    </ligand>
</feature>
<feature type="binding site" evidence="1">
    <location>
        <begin position="186"/>
        <end position="191"/>
    </location>
    <ligand>
        <name>NADP(+)</name>
        <dbReference type="ChEBI" id="CHEBI:58349"/>
    </ligand>
</feature>
<feature type="site" description="Important for activity" evidence="1">
    <location>
        <position position="97"/>
    </location>
</feature>
<proteinExistence type="inferred from homology"/>
<keyword id="KW-0521">NADP</keyword>
<keyword id="KW-0560">Oxidoreductase</keyword>
<keyword id="KW-0627">Porphyrin biosynthesis</keyword>
<dbReference type="EC" id="1.2.1.70" evidence="1"/>
<dbReference type="EMBL" id="CP000768">
    <property type="protein sequence ID" value="ABS43394.1"/>
    <property type="molecule type" value="Genomic_DNA"/>
</dbReference>
<dbReference type="SMR" id="A7H4K0"/>
<dbReference type="KEGG" id="cjd:JJD26997_1388"/>
<dbReference type="HOGENOM" id="CLU_035113_2_2_7"/>
<dbReference type="UniPathway" id="UPA00251">
    <property type="reaction ID" value="UER00316"/>
</dbReference>
<dbReference type="Proteomes" id="UP000002302">
    <property type="component" value="Chromosome"/>
</dbReference>
<dbReference type="GO" id="GO:0008883">
    <property type="term" value="F:glutamyl-tRNA reductase activity"/>
    <property type="evidence" value="ECO:0007669"/>
    <property type="project" value="UniProtKB-UniRule"/>
</dbReference>
<dbReference type="GO" id="GO:0050661">
    <property type="term" value="F:NADP binding"/>
    <property type="evidence" value="ECO:0007669"/>
    <property type="project" value="InterPro"/>
</dbReference>
<dbReference type="GO" id="GO:0019353">
    <property type="term" value="P:protoporphyrinogen IX biosynthetic process from glutamate"/>
    <property type="evidence" value="ECO:0007669"/>
    <property type="project" value="TreeGrafter"/>
</dbReference>
<dbReference type="CDD" id="cd05213">
    <property type="entry name" value="NAD_bind_Glutamyl_tRNA_reduct"/>
    <property type="match status" value="1"/>
</dbReference>
<dbReference type="FunFam" id="3.30.460.30:FF:000001">
    <property type="entry name" value="Glutamyl-tRNA reductase"/>
    <property type="match status" value="1"/>
</dbReference>
<dbReference type="Gene3D" id="3.30.460.30">
    <property type="entry name" value="Glutamyl-tRNA reductase, N-terminal domain"/>
    <property type="match status" value="1"/>
</dbReference>
<dbReference type="Gene3D" id="3.40.50.720">
    <property type="entry name" value="NAD(P)-binding Rossmann-like Domain"/>
    <property type="match status" value="1"/>
</dbReference>
<dbReference type="HAMAP" id="MF_00087">
    <property type="entry name" value="Glu_tRNA_reductase"/>
    <property type="match status" value="1"/>
</dbReference>
<dbReference type="InterPro" id="IPR000343">
    <property type="entry name" value="4pyrrol_synth_GluRdtase"/>
</dbReference>
<dbReference type="InterPro" id="IPR015896">
    <property type="entry name" value="4pyrrol_synth_GluRdtase_dimer"/>
</dbReference>
<dbReference type="InterPro" id="IPR015895">
    <property type="entry name" value="4pyrrol_synth_GluRdtase_N"/>
</dbReference>
<dbReference type="InterPro" id="IPR018214">
    <property type="entry name" value="GluRdtase_CS"/>
</dbReference>
<dbReference type="InterPro" id="IPR036453">
    <property type="entry name" value="GluRdtase_dimer_dom_sf"/>
</dbReference>
<dbReference type="InterPro" id="IPR036343">
    <property type="entry name" value="GluRdtase_N_sf"/>
</dbReference>
<dbReference type="InterPro" id="IPR036291">
    <property type="entry name" value="NAD(P)-bd_dom_sf"/>
</dbReference>
<dbReference type="InterPro" id="IPR006151">
    <property type="entry name" value="Shikm_DH/Glu-tRNA_Rdtase"/>
</dbReference>
<dbReference type="NCBIfam" id="TIGR01035">
    <property type="entry name" value="hemA"/>
    <property type="match status" value="1"/>
</dbReference>
<dbReference type="PANTHER" id="PTHR43013">
    <property type="entry name" value="GLUTAMYL-TRNA REDUCTASE"/>
    <property type="match status" value="1"/>
</dbReference>
<dbReference type="PANTHER" id="PTHR43013:SF1">
    <property type="entry name" value="GLUTAMYL-TRNA REDUCTASE"/>
    <property type="match status" value="1"/>
</dbReference>
<dbReference type="Pfam" id="PF00745">
    <property type="entry name" value="GlutR_dimer"/>
    <property type="match status" value="1"/>
</dbReference>
<dbReference type="Pfam" id="PF05201">
    <property type="entry name" value="GlutR_N"/>
    <property type="match status" value="1"/>
</dbReference>
<dbReference type="Pfam" id="PF01488">
    <property type="entry name" value="Shikimate_DH"/>
    <property type="match status" value="1"/>
</dbReference>
<dbReference type="PIRSF" id="PIRSF000445">
    <property type="entry name" value="4pyrrol_synth_GluRdtase"/>
    <property type="match status" value="1"/>
</dbReference>
<dbReference type="SUPFAM" id="SSF69742">
    <property type="entry name" value="Glutamyl tRNA-reductase catalytic, N-terminal domain"/>
    <property type="match status" value="1"/>
</dbReference>
<dbReference type="SUPFAM" id="SSF69075">
    <property type="entry name" value="Glutamyl tRNA-reductase dimerization domain"/>
    <property type="match status" value="1"/>
</dbReference>
<dbReference type="SUPFAM" id="SSF51735">
    <property type="entry name" value="NAD(P)-binding Rossmann-fold domains"/>
    <property type="match status" value="1"/>
</dbReference>
<dbReference type="PROSITE" id="PS00747">
    <property type="entry name" value="GLUTR"/>
    <property type="match status" value="1"/>
</dbReference>
<gene>
    <name evidence="1" type="primary">hemA</name>
    <name type="ordered locus">JJD26997_1388</name>
</gene>
<reference key="1">
    <citation type="submission" date="2007-07" db="EMBL/GenBank/DDBJ databases">
        <title>Complete genome sequence of Campylobacter jejuni subsp doylei 269.97 isolated from human blood.</title>
        <authorList>
            <person name="Fouts D.E."/>
            <person name="Mongodin E.F."/>
            <person name="Puiu D."/>
            <person name="Sebastian Y."/>
            <person name="Miller W.G."/>
            <person name="Mandrell R.E."/>
            <person name="Lastovica A.J."/>
            <person name="Nelson K.E."/>
        </authorList>
    </citation>
    <scope>NUCLEOTIDE SEQUENCE [LARGE SCALE GENOMIC DNA]</scope>
    <source>
        <strain>ATCC BAA-1458 / RM4099 / 269.97</strain>
    </source>
</reference>
<accession>A7H4K0</accession>